<name>RUVB_TROW8</name>
<comment type="function">
    <text evidence="1">The RuvA-RuvB-RuvC complex processes Holliday junction (HJ) DNA during genetic recombination and DNA repair, while the RuvA-RuvB complex plays an important role in the rescue of blocked DNA replication forks via replication fork reversal (RFR). RuvA specifically binds to HJ cruciform DNA, conferring on it an open structure. The RuvB hexamer acts as an ATP-dependent pump, pulling dsDNA into and through the RuvAB complex. RuvB forms 2 homohexamers on either side of HJ DNA bound by 1 or 2 RuvA tetramers; 4 subunits per hexamer contact DNA at a time. Coordinated motions by a converter formed by DNA-disengaged RuvB subunits stimulates ATP hydrolysis and nucleotide exchange. Immobilization of the converter enables RuvB to convert the ATP-contained energy into a lever motion, pulling 2 nucleotides of DNA out of the RuvA tetramer per ATP hydrolyzed, thus driving DNA branch migration. The RuvB motors rotate together with the DNA substrate, which together with the progressing nucleotide cycle form the mechanistic basis for DNA recombination by continuous HJ branch migration. Branch migration allows RuvC to scan DNA until it finds its consensus sequence, where it cleaves and resolves cruciform DNA.</text>
</comment>
<comment type="catalytic activity">
    <reaction evidence="1">
        <text>ATP + H2O = ADP + phosphate + H(+)</text>
        <dbReference type="Rhea" id="RHEA:13065"/>
        <dbReference type="ChEBI" id="CHEBI:15377"/>
        <dbReference type="ChEBI" id="CHEBI:15378"/>
        <dbReference type="ChEBI" id="CHEBI:30616"/>
        <dbReference type="ChEBI" id="CHEBI:43474"/>
        <dbReference type="ChEBI" id="CHEBI:456216"/>
    </reaction>
</comment>
<comment type="subunit">
    <text evidence="1">Homohexamer. Forms an RuvA(8)-RuvB(12)-Holliday junction (HJ) complex. HJ DNA is sandwiched between 2 RuvA tetramers; dsDNA enters through RuvA and exits via RuvB. An RuvB hexamer assembles on each DNA strand where it exits the tetramer. Each RuvB hexamer is contacted by two RuvA subunits (via domain III) on 2 adjacent RuvB subunits; this complex drives branch migration. In the full resolvosome a probable DNA-RuvA(4)-RuvB(12)-RuvC(2) complex forms which resolves the HJ.</text>
</comment>
<comment type="subcellular location">
    <subcellularLocation>
        <location evidence="1">Cytoplasm</location>
    </subcellularLocation>
</comment>
<comment type="domain">
    <text evidence="1">Has 3 domains, the large (RuvB-L) and small ATPase (RuvB-S) domains and the C-terminal head (RuvB-H) domain. The head domain binds DNA, while the ATPase domains jointly bind ATP, ADP or are empty depending on the state of the subunit in the translocation cycle. During a single DNA translocation step the structure of each domain remains the same, but their relative positions change.</text>
</comment>
<comment type="similarity">
    <text evidence="1">Belongs to the RuvB family.</text>
</comment>
<comment type="sequence caution" evidence="2">
    <conflict type="erroneous initiation">
        <sequence resource="EMBL-CDS" id="CAD67168"/>
    </conflict>
</comment>
<reference key="1">
    <citation type="journal article" date="2003" name="Lancet">
        <title>Sequencing and analysis of the genome of the Whipple's disease bacterium Tropheryma whipplei.</title>
        <authorList>
            <person name="Bentley S.D."/>
            <person name="Maiwald M."/>
            <person name="Murphy L.D."/>
            <person name="Pallen M.J."/>
            <person name="Yeats C.A."/>
            <person name="Dover L.G."/>
            <person name="Norbertczak H.T."/>
            <person name="Besra G.S."/>
            <person name="Quail M.A."/>
            <person name="Harris D.E."/>
            <person name="von Herbay A."/>
            <person name="Goble A."/>
            <person name="Rutter S."/>
            <person name="Squares R."/>
            <person name="Squares S."/>
            <person name="Barrell B.G."/>
            <person name="Parkhill J."/>
            <person name="Relman D.A."/>
        </authorList>
    </citation>
    <scope>NUCLEOTIDE SEQUENCE [LARGE SCALE GENOMIC DNA]</scope>
    <source>
        <strain>TW08/27</strain>
    </source>
</reference>
<accession>Q83HN0</accession>
<sequence length="345" mass="38012">MPLDILQNRNNLLDVTSDEKQTEGALRPKLLAEFVGQNKVKNQLALLIQAAKIQGRVTDHALLAGPPGLGKTTLAMIVAAECGVSIRMSSGPAIQHAGDLAALLSSLLPGELLFIDEIHRMSRVAEEMLYLAMEDFRIDIMVGKGPGATSVPLELSPFTLVGATTRAGLLPGPLRDRFGFTARLDFYSPEELLQVLIRSARLMEIQYYDDALESIAVRSRGTPRVANRLLRRTRDYLLVSNSSEILSKEIALKAMDVYEVDSLGLDRLDRAVLHAIFDRFSGGPVGIKTLSAYLGEEAETIENSIEPFLVRQGLLVRTPRGRQITDLARKHMGFKEDLSGFELYL</sequence>
<protein>
    <recommendedName>
        <fullName evidence="1">Holliday junction branch migration complex subunit RuvB</fullName>
        <ecNumber evidence="1">3.6.4.-</ecNumber>
    </recommendedName>
</protein>
<gene>
    <name evidence="1" type="primary">ruvB</name>
    <name type="ordered locus">TW501</name>
</gene>
<proteinExistence type="inferred from homology"/>
<evidence type="ECO:0000255" key="1">
    <source>
        <dbReference type="HAMAP-Rule" id="MF_00016"/>
    </source>
</evidence>
<evidence type="ECO:0000305" key="2"/>
<keyword id="KW-0067">ATP-binding</keyword>
<keyword id="KW-0963">Cytoplasm</keyword>
<keyword id="KW-0227">DNA damage</keyword>
<keyword id="KW-0233">DNA recombination</keyword>
<keyword id="KW-0234">DNA repair</keyword>
<keyword id="KW-0238">DNA-binding</keyword>
<keyword id="KW-0378">Hydrolase</keyword>
<keyword id="KW-0547">Nucleotide-binding</keyword>
<dbReference type="EC" id="3.6.4.-" evidence="1"/>
<dbReference type="EMBL" id="BX251411">
    <property type="protein sequence ID" value="CAD67168.1"/>
    <property type="status" value="ALT_INIT"/>
    <property type="molecule type" value="Genomic_DNA"/>
</dbReference>
<dbReference type="RefSeq" id="WP_011102467.1">
    <property type="nucleotide sequence ID" value="NC_004551.1"/>
</dbReference>
<dbReference type="SMR" id="Q83HN0"/>
<dbReference type="GeneID" id="67388280"/>
<dbReference type="KEGG" id="tws:TW501"/>
<dbReference type="HOGENOM" id="CLU_055599_1_0_11"/>
<dbReference type="GO" id="GO:0005737">
    <property type="term" value="C:cytoplasm"/>
    <property type="evidence" value="ECO:0007669"/>
    <property type="project" value="UniProtKB-SubCell"/>
</dbReference>
<dbReference type="GO" id="GO:0048476">
    <property type="term" value="C:Holliday junction resolvase complex"/>
    <property type="evidence" value="ECO:0007669"/>
    <property type="project" value="UniProtKB-UniRule"/>
</dbReference>
<dbReference type="GO" id="GO:0005524">
    <property type="term" value="F:ATP binding"/>
    <property type="evidence" value="ECO:0007669"/>
    <property type="project" value="UniProtKB-UniRule"/>
</dbReference>
<dbReference type="GO" id="GO:0016887">
    <property type="term" value="F:ATP hydrolysis activity"/>
    <property type="evidence" value="ECO:0007669"/>
    <property type="project" value="InterPro"/>
</dbReference>
<dbReference type="GO" id="GO:0000400">
    <property type="term" value="F:four-way junction DNA binding"/>
    <property type="evidence" value="ECO:0007669"/>
    <property type="project" value="UniProtKB-UniRule"/>
</dbReference>
<dbReference type="GO" id="GO:0009378">
    <property type="term" value="F:four-way junction helicase activity"/>
    <property type="evidence" value="ECO:0007669"/>
    <property type="project" value="InterPro"/>
</dbReference>
<dbReference type="GO" id="GO:0006310">
    <property type="term" value="P:DNA recombination"/>
    <property type="evidence" value="ECO:0007669"/>
    <property type="project" value="UniProtKB-UniRule"/>
</dbReference>
<dbReference type="GO" id="GO:0006281">
    <property type="term" value="P:DNA repair"/>
    <property type="evidence" value="ECO:0007669"/>
    <property type="project" value="UniProtKB-UniRule"/>
</dbReference>
<dbReference type="CDD" id="cd00009">
    <property type="entry name" value="AAA"/>
    <property type="match status" value="1"/>
</dbReference>
<dbReference type="Gene3D" id="1.10.8.60">
    <property type="match status" value="1"/>
</dbReference>
<dbReference type="Gene3D" id="3.40.50.300">
    <property type="entry name" value="P-loop containing nucleotide triphosphate hydrolases"/>
    <property type="match status" value="1"/>
</dbReference>
<dbReference type="Gene3D" id="1.10.10.10">
    <property type="entry name" value="Winged helix-like DNA-binding domain superfamily/Winged helix DNA-binding domain"/>
    <property type="match status" value="1"/>
</dbReference>
<dbReference type="HAMAP" id="MF_00016">
    <property type="entry name" value="DNA_HJ_migration_RuvB"/>
    <property type="match status" value="1"/>
</dbReference>
<dbReference type="InterPro" id="IPR003593">
    <property type="entry name" value="AAA+_ATPase"/>
</dbReference>
<dbReference type="InterPro" id="IPR041445">
    <property type="entry name" value="AAA_lid_4"/>
</dbReference>
<dbReference type="InterPro" id="IPR004605">
    <property type="entry name" value="DNA_helicase_Holl-junc_RuvB"/>
</dbReference>
<dbReference type="InterPro" id="IPR027417">
    <property type="entry name" value="P-loop_NTPase"/>
</dbReference>
<dbReference type="InterPro" id="IPR008824">
    <property type="entry name" value="RuvB-like_N"/>
</dbReference>
<dbReference type="InterPro" id="IPR008823">
    <property type="entry name" value="RuvB_C"/>
</dbReference>
<dbReference type="InterPro" id="IPR036388">
    <property type="entry name" value="WH-like_DNA-bd_sf"/>
</dbReference>
<dbReference type="InterPro" id="IPR036390">
    <property type="entry name" value="WH_DNA-bd_sf"/>
</dbReference>
<dbReference type="NCBIfam" id="NF000868">
    <property type="entry name" value="PRK00080.1"/>
    <property type="match status" value="1"/>
</dbReference>
<dbReference type="NCBIfam" id="TIGR00635">
    <property type="entry name" value="ruvB"/>
    <property type="match status" value="1"/>
</dbReference>
<dbReference type="PANTHER" id="PTHR42848">
    <property type="match status" value="1"/>
</dbReference>
<dbReference type="PANTHER" id="PTHR42848:SF1">
    <property type="entry name" value="HOLLIDAY JUNCTION BRANCH MIGRATION COMPLEX SUBUNIT RUVB"/>
    <property type="match status" value="1"/>
</dbReference>
<dbReference type="Pfam" id="PF17864">
    <property type="entry name" value="AAA_lid_4"/>
    <property type="match status" value="1"/>
</dbReference>
<dbReference type="Pfam" id="PF05491">
    <property type="entry name" value="RuvB_C"/>
    <property type="match status" value="1"/>
</dbReference>
<dbReference type="Pfam" id="PF05496">
    <property type="entry name" value="RuvB_N"/>
    <property type="match status" value="1"/>
</dbReference>
<dbReference type="SMART" id="SM00382">
    <property type="entry name" value="AAA"/>
    <property type="match status" value="1"/>
</dbReference>
<dbReference type="SUPFAM" id="SSF52540">
    <property type="entry name" value="P-loop containing nucleoside triphosphate hydrolases"/>
    <property type="match status" value="1"/>
</dbReference>
<dbReference type="SUPFAM" id="SSF46785">
    <property type="entry name" value="Winged helix' DNA-binding domain"/>
    <property type="match status" value="1"/>
</dbReference>
<feature type="chain" id="PRO_0000165624" description="Holliday junction branch migration complex subunit RuvB">
    <location>
        <begin position="1"/>
        <end position="345"/>
    </location>
</feature>
<feature type="region of interest" description="Large ATPase domain (RuvB-L)" evidence="1">
    <location>
        <begin position="3"/>
        <end position="187"/>
    </location>
</feature>
<feature type="region of interest" description="Small ATPAse domain (RuvB-S)" evidence="1">
    <location>
        <begin position="188"/>
        <end position="259"/>
    </location>
</feature>
<feature type="region of interest" description="Head domain (RuvB-H)" evidence="1">
    <location>
        <begin position="262"/>
        <end position="345"/>
    </location>
</feature>
<feature type="binding site" evidence="1">
    <location>
        <position position="26"/>
    </location>
    <ligand>
        <name>ATP</name>
        <dbReference type="ChEBI" id="CHEBI:30616"/>
    </ligand>
</feature>
<feature type="binding site" evidence="1">
    <location>
        <position position="27"/>
    </location>
    <ligand>
        <name>ATP</name>
        <dbReference type="ChEBI" id="CHEBI:30616"/>
    </ligand>
</feature>
<feature type="binding site" evidence="1">
    <location>
        <position position="68"/>
    </location>
    <ligand>
        <name>ATP</name>
        <dbReference type="ChEBI" id="CHEBI:30616"/>
    </ligand>
</feature>
<feature type="binding site" evidence="1">
    <location>
        <position position="71"/>
    </location>
    <ligand>
        <name>ATP</name>
        <dbReference type="ChEBI" id="CHEBI:30616"/>
    </ligand>
</feature>
<feature type="binding site" evidence="1">
    <location>
        <position position="72"/>
    </location>
    <ligand>
        <name>ATP</name>
        <dbReference type="ChEBI" id="CHEBI:30616"/>
    </ligand>
</feature>
<feature type="binding site" evidence="1">
    <location>
        <position position="72"/>
    </location>
    <ligand>
        <name>Mg(2+)</name>
        <dbReference type="ChEBI" id="CHEBI:18420"/>
    </ligand>
</feature>
<feature type="binding site" evidence="1">
    <location>
        <position position="73"/>
    </location>
    <ligand>
        <name>ATP</name>
        <dbReference type="ChEBI" id="CHEBI:30616"/>
    </ligand>
</feature>
<feature type="binding site" evidence="1">
    <location>
        <begin position="134"/>
        <end position="136"/>
    </location>
    <ligand>
        <name>ATP</name>
        <dbReference type="ChEBI" id="CHEBI:30616"/>
    </ligand>
</feature>
<feature type="binding site" evidence="1">
    <location>
        <position position="177"/>
    </location>
    <ligand>
        <name>ATP</name>
        <dbReference type="ChEBI" id="CHEBI:30616"/>
    </ligand>
</feature>
<feature type="binding site" evidence="1">
    <location>
        <position position="187"/>
    </location>
    <ligand>
        <name>ATP</name>
        <dbReference type="ChEBI" id="CHEBI:30616"/>
    </ligand>
</feature>
<feature type="binding site" evidence="1">
    <location>
        <position position="224"/>
    </location>
    <ligand>
        <name>ATP</name>
        <dbReference type="ChEBI" id="CHEBI:30616"/>
    </ligand>
</feature>
<feature type="binding site" evidence="1">
    <location>
        <position position="317"/>
    </location>
    <ligand>
        <name>DNA</name>
        <dbReference type="ChEBI" id="CHEBI:16991"/>
    </ligand>
</feature>
<feature type="binding site" evidence="1">
    <location>
        <position position="322"/>
    </location>
    <ligand>
        <name>DNA</name>
        <dbReference type="ChEBI" id="CHEBI:16991"/>
    </ligand>
</feature>
<organism>
    <name type="scientific">Tropheryma whipplei (strain TW08/27)</name>
    <name type="common">Whipple's bacillus</name>
    <dbReference type="NCBI Taxonomy" id="218496"/>
    <lineage>
        <taxon>Bacteria</taxon>
        <taxon>Bacillati</taxon>
        <taxon>Actinomycetota</taxon>
        <taxon>Actinomycetes</taxon>
        <taxon>Micrococcales</taxon>
        <taxon>Tropherymataceae</taxon>
        <taxon>Tropheryma</taxon>
    </lineage>
</organism>